<dbReference type="EC" id="4.2.2.n1" evidence="1"/>
<dbReference type="EMBL" id="CP000514">
    <property type="protein sequence ID" value="ABM19560.1"/>
    <property type="molecule type" value="Genomic_DNA"/>
</dbReference>
<dbReference type="SMR" id="A1U3J1"/>
<dbReference type="STRING" id="351348.Maqu_2485"/>
<dbReference type="CAZy" id="GH23">
    <property type="family name" value="Glycoside Hydrolase Family 23"/>
</dbReference>
<dbReference type="KEGG" id="maq:Maqu_2485"/>
<dbReference type="eggNOG" id="COG4623">
    <property type="taxonomic scope" value="Bacteria"/>
</dbReference>
<dbReference type="HOGENOM" id="CLU_027494_0_1_6"/>
<dbReference type="OrthoDB" id="9815002at2"/>
<dbReference type="Proteomes" id="UP000000998">
    <property type="component" value="Chromosome"/>
</dbReference>
<dbReference type="GO" id="GO:0009279">
    <property type="term" value="C:cell outer membrane"/>
    <property type="evidence" value="ECO:0007669"/>
    <property type="project" value="UniProtKB-SubCell"/>
</dbReference>
<dbReference type="GO" id="GO:0008933">
    <property type="term" value="F:peptidoglycan lytic transglycosylase activity"/>
    <property type="evidence" value="ECO:0007669"/>
    <property type="project" value="UniProtKB-UniRule"/>
</dbReference>
<dbReference type="GO" id="GO:0016998">
    <property type="term" value="P:cell wall macromolecule catabolic process"/>
    <property type="evidence" value="ECO:0007669"/>
    <property type="project" value="UniProtKB-UniRule"/>
</dbReference>
<dbReference type="GO" id="GO:0071555">
    <property type="term" value="P:cell wall organization"/>
    <property type="evidence" value="ECO:0007669"/>
    <property type="project" value="UniProtKB-KW"/>
</dbReference>
<dbReference type="GO" id="GO:0009253">
    <property type="term" value="P:peptidoglycan catabolic process"/>
    <property type="evidence" value="ECO:0007669"/>
    <property type="project" value="TreeGrafter"/>
</dbReference>
<dbReference type="CDD" id="cd13403">
    <property type="entry name" value="MLTF-like"/>
    <property type="match status" value="1"/>
</dbReference>
<dbReference type="CDD" id="cd01009">
    <property type="entry name" value="PBP2_YfhD_N"/>
    <property type="match status" value="1"/>
</dbReference>
<dbReference type="Gene3D" id="1.10.530.10">
    <property type="match status" value="1"/>
</dbReference>
<dbReference type="Gene3D" id="3.40.190.10">
    <property type="entry name" value="Periplasmic binding protein-like II"/>
    <property type="match status" value="2"/>
</dbReference>
<dbReference type="HAMAP" id="MF_02016">
    <property type="entry name" value="MltF"/>
    <property type="match status" value="1"/>
</dbReference>
<dbReference type="InterPro" id="IPR023346">
    <property type="entry name" value="Lysozyme-like_dom_sf"/>
</dbReference>
<dbReference type="InterPro" id="IPR023703">
    <property type="entry name" value="MltF"/>
</dbReference>
<dbReference type="InterPro" id="IPR001638">
    <property type="entry name" value="Solute-binding_3/MltF_N"/>
</dbReference>
<dbReference type="InterPro" id="IPR000189">
    <property type="entry name" value="Transglyc_AS"/>
</dbReference>
<dbReference type="InterPro" id="IPR008258">
    <property type="entry name" value="Transglycosylase_SLT_dom_1"/>
</dbReference>
<dbReference type="NCBIfam" id="NF008112">
    <property type="entry name" value="PRK10859.1"/>
    <property type="match status" value="1"/>
</dbReference>
<dbReference type="PANTHER" id="PTHR35936">
    <property type="entry name" value="MEMBRANE-BOUND LYTIC MUREIN TRANSGLYCOSYLASE F"/>
    <property type="match status" value="1"/>
</dbReference>
<dbReference type="PANTHER" id="PTHR35936:SF32">
    <property type="entry name" value="MEMBRANE-BOUND LYTIC MUREIN TRANSGLYCOSYLASE F"/>
    <property type="match status" value="1"/>
</dbReference>
<dbReference type="Pfam" id="PF00497">
    <property type="entry name" value="SBP_bac_3"/>
    <property type="match status" value="1"/>
</dbReference>
<dbReference type="Pfam" id="PF01464">
    <property type="entry name" value="SLT"/>
    <property type="match status" value="1"/>
</dbReference>
<dbReference type="SMART" id="SM00062">
    <property type="entry name" value="PBPb"/>
    <property type="match status" value="1"/>
</dbReference>
<dbReference type="SUPFAM" id="SSF53955">
    <property type="entry name" value="Lysozyme-like"/>
    <property type="match status" value="1"/>
</dbReference>
<dbReference type="SUPFAM" id="SSF53850">
    <property type="entry name" value="Periplasmic binding protein-like II"/>
    <property type="match status" value="1"/>
</dbReference>
<dbReference type="PROSITE" id="PS51257">
    <property type="entry name" value="PROKAR_LIPOPROTEIN"/>
    <property type="match status" value="1"/>
</dbReference>
<dbReference type="PROSITE" id="PS00922">
    <property type="entry name" value="TRANSGLYCOSYLASE"/>
    <property type="match status" value="1"/>
</dbReference>
<reference key="1">
    <citation type="journal article" date="2011" name="Appl. Environ. Microbiol.">
        <title>Genomic potential of Marinobacter aquaeolei, a biogeochemical 'opportunitroph'.</title>
        <authorList>
            <person name="Singer E."/>
            <person name="Webb E.A."/>
            <person name="Nelson W.C."/>
            <person name="Heidelberg J.F."/>
            <person name="Ivanova N."/>
            <person name="Pati A."/>
            <person name="Edwards K.J."/>
        </authorList>
    </citation>
    <scope>NUCLEOTIDE SEQUENCE [LARGE SCALE GENOMIC DNA]</scope>
    <source>
        <strain>ATCC 700491 / DSM 11845 / VT8</strain>
    </source>
</reference>
<gene>
    <name evidence="1" type="primary">mltF</name>
    <name type="ordered locus">Maqu_2485</name>
</gene>
<accession>A1U3J1</accession>
<protein>
    <recommendedName>
        <fullName evidence="1">Membrane-bound lytic murein transglycosylase F</fullName>
        <ecNumber evidence="1">4.2.2.n1</ecNumber>
    </recommendedName>
    <alternativeName>
        <fullName evidence="1">Murein lyase F</fullName>
    </alternativeName>
</protein>
<name>MLTF_MARN8</name>
<organism>
    <name type="scientific">Marinobacter nauticus (strain ATCC 700491 / DSM 11845 / VT8)</name>
    <name type="common">Marinobacter aquaeolei</name>
    <dbReference type="NCBI Taxonomy" id="351348"/>
    <lineage>
        <taxon>Bacteria</taxon>
        <taxon>Pseudomonadati</taxon>
        <taxon>Pseudomonadota</taxon>
        <taxon>Gammaproteobacteria</taxon>
        <taxon>Pseudomonadales</taxon>
        <taxon>Marinobacteraceae</taxon>
        <taxon>Marinobacter</taxon>
    </lineage>
</organism>
<evidence type="ECO:0000255" key="1">
    <source>
        <dbReference type="HAMAP-Rule" id="MF_02016"/>
    </source>
</evidence>
<evidence type="ECO:0000256" key="2">
    <source>
        <dbReference type="SAM" id="MobiDB-lite"/>
    </source>
</evidence>
<keyword id="KW-0998">Cell outer membrane</keyword>
<keyword id="KW-0961">Cell wall biogenesis/degradation</keyword>
<keyword id="KW-0456">Lyase</keyword>
<keyword id="KW-0472">Membrane</keyword>
<keyword id="KW-0732">Signal</keyword>
<comment type="function">
    <text evidence="1">Murein-degrading enzyme that degrades murein glycan strands and insoluble, high-molecular weight murein sacculi, with the concomitant formation of a 1,6-anhydromuramoyl product. Lytic transglycosylases (LTs) play an integral role in the metabolism of the peptidoglycan (PG) sacculus. Their lytic action creates space within the PG sacculus to allow for its expansion as well as for the insertion of various structures such as secretion systems and flagella.</text>
</comment>
<comment type="catalytic activity">
    <reaction evidence="1">
        <text>Exolytic cleavage of the (1-&gt;4)-beta-glycosidic linkage between N-acetylmuramic acid (MurNAc) and N-acetylglucosamine (GlcNAc) residues in peptidoglycan, from either the reducing or the non-reducing ends of the peptidoglycan chains, with concomitant formation of a 1,6-anhydrobond in the MurNAc residue.</text>
        <dbReference type="EC" id="4.2.2.n1"/>
    </reaction>
</comment>
<comment type="subcellular location">
    <subcellularLocation>
        <location>Cell outer membrane</location>
        <topology>Peripheral membrane protein</topology>
    </subcellularLocation>
    <text evidence="1">Attached to the inner leaflet of the outer membrane.</text>
</comment>
<comment type="domain">
    <text evidence="1">The N-terminal domain does not have lytic activity and probably modulates enzymatic activity. The C-terminal domain is the catalytic active domain.</text>
</comment>
<comment type="similarity">
    <text evidence="1">In the N-terminal section; belongs to the bacterial solute-binding protein 3 family.</text>
</comment>
<comment type="similarity">
    <text evidence="1">In the C-terminal section; belongs to the transglycosylase Slt family.</text>
</comment>
<feature type="signal peptide" evidence="1">
    <location>
        <begin position="1"/>
        <end position="33"/>
    </location>
</feature>
<feature type="chain" id="PRO_5000209147" description="Membrane-bound lytic murein transglycosylase F">
    <location>
        <begin position="34"/>
        <end position="502"/>
    </location>
</feature>
<feature type="region of interest" description="Non-LT domain" evidence="1">
    <location>
        <begin position="34"/>
        <end position="264"/>
    </location>
</feature>
<feature type="region of interest" description="LT domain" evidence="1">
    <location>
        <begin position="265"/>
        <end position="502"/>
    </location>
</feature>
<feature type="region of interest" description="Disordered" evidence="2">
    <location>
        <begin position="457"/>
        <end position="502"/>
    </location>
</feature>
<feature type="compositionally biased region" description="Basic and acidic residues" evidence="2">
    <location>
        <begin position="479"/>
        <end position="493"/>
    </location>
</feature>
<feature type="active site" evidence="1">
    <location>
        <position position="311"/>
    </location>
</feature>
<proteinExistence type="inferred from homology"/>
<sequence length="502" mass="56385">MSRFISTFRSSSAQLSIVLAVILATGCSQPTTLQEIREEGVLHVITRVAPSIYYQDREQDTGYDYELARLFANELGVELRVRVADDNSEILSVLSRNYAHVGLAGLTQRPDFDNQYRSVPIGVSAQSVIVYHKEVPAPESLEDLASETIHMLADSNHEHLIADPANEAGPIIQKHPGLDAAGLLARVESGEFGYAAVASNELDLNHVFFPKVYEAFALNEPSDLVWLFPAAQDDTLVNAAEAFMERVNNNGTMAQLAERFYGHLDRLNYVGARTFMHHVENRLPRYQSLFKDYAQESGMDWRLLAAIGYQESHWRPNAVSPTGVRGLMMLTRTTANYIGINNRLDAEESIEGGARYFRMVHGRIPDRIPEPDRTWFALASYNVGFGHLEDARRLAESAGKDPDRWMDVKEFLPLLAQKEWYTKTRFGYARGHEPVVYVQNIRRYYDVLVRITEPDAPSASGLEDQLAWLGDNEAGPEAPAKESQPDLRADLPPELRLIPPTL</sequence>